<gene>
    <name evidence="5" type="primary">avaB</name>
</gene>
<protein>
    <recommendedName>
        <fullName evidence="5">FAD-dependent monooxygenase avaB</fullName>
        <ecNumber evidence="4">1.-.-.-</ecNumber>
    </recommendedName>
    <alternativeName>
        <fullName evidence="5">Ava biosynthesis cluster protein B</fullName>
    </alternativeName>
</protein>
<evidence type="ECO:0000250" key="1">
    <source>
        <dbReference type="UniProtKB" id="Q47PU3"/>
    </source>
</evidence>
<evidence type="ECO:0000255" key="2"/>
<evidence type="ECO:0000256" key="3">
    <source>
        <dbReference type="SAM" id="MobiDB-lite"/>
    </source>
</evidence>
<evidence type="ECO:0000269" key="4">
    <source>
    </source>
</evidence>
<evidence type="ECO:0000303" key="5">
    <source>
    </source>
</evidence>
<evidence type="ECO:0000305" key="6"/>
<organism>
    <name type="scientific">Aspergillus versicolor</name>
    <dbReference type="NCBI Taxonomy" id="46472"/>
    <lineage>
        <taxon>Eukaryota</taxon>
        <taxon>Fungi</taxon>
        <taxon>Dikarya</taxon>
        <taxon>Ascomycota</taxon>
        <taxon>Pezizomycotina</taxon>
        <taxon>Eurotiomycetes</taxon>
        <taxon>Eurotiomycetidae</taxon>
        <taxon>Eurotiales</taxon>
        <taxon>Aspergillaceae</taxon>
        <taxon>Aspergillus</taxon>
        <taxon>Aspergillus subgen. Nidulantes</taxon>
    </lineage>
</organism>
<sequence length="728" mass="80739">MPRVVIVGSGMQYSYRVIDLLLTFFFYSGLYGLIAAKTYLQVTDPRYPSNQQCENTDDVPQSFQRPRDTRSTHDDTDLLLLESGSSLGGTWAEERLYPNLLSQNSEGLYEFSDMSLSEAMDGVDDEGQADRDTPVEDRFIPGWKLSRYLTAWSRKWNLPQYMRFNWQVKKISRLPTKEWELGIVIHPDQPSQTRHTTILCDKLILSPGLTSVPNILNFSPASGRPSAPAENVIHAKEVGPWCRDNLGYQPIPGQDAHPSPTKPSRVPRRVAIYGGAKSSFDLVHMFATLHLKDPSFHLKGLDATDSIEPVQVHWIIRDGGSGPAWMSPPRSNMPNGQSIASDKVASTRFVGVLSPCTPLVPKRLTLRRSSNFLGWKLAVEGSWLARLLHGNPIGRYFVRRFWKALDKSWGDFAGYDSAQHGGKMEHLRPTNSIIYCGAPLGIANQRGFWDAVRAPNVHIHRSAIESVSGDASSKGVIIDLADDTTLPLTDLLIQATGWKPNVPVEFTPPPLTLQLGLSCRVPRAILTPTNSAQDVKVDPEIKKLIHYWDGIDSVSASRIRRVFGPNSSPPKDVVESTTAPTDEFEFSPYRLFRRMVAPELVEEGDRSFVALGFVLTATTAVVAEVQALWAAAFLTGGLDDTRTHDALSINAMSRSDVDRDVSEDVVWGGLTGVGPGVDTLNYNDMLLRDLGLSPYRMGGGFINELTSVYTPKAYRGIVEEWKAKHGRP</sequence>
<keyword id="KW-0274">FAD</keyword>
<keyword id="KW-0285">Flavoprotein</keyword>
<keyword id="KW-0472">Membrane</keyword>
<keyword id="KW-0503">Monooxygenase</keyword>
<keyword id="KW-0521">NADP</keyword>
<keyword id="KW-0560">Oxidoreductase</keyword>
<keyword id="KW-0812">Transmembrane</keyword>
<keyword id="KW-1133">Transmembrane helix</keyword>
<comment type="function">
    <text evidence="4">Multifunctional FAD-dependent monooxygenase; part of the cluster that mediates the biosynthesis of a highly modified cyclo-arginine-tryptophan dipeptide (cRW) (PubMed:36702957). Within the pathway, avaB uses the avaA cyclo-arginine-tryptophan dipeptide (cRW) as substrate to generate the cyclo-Arg-formylkynurenine diketopiperazine (DKP). AvaB also catalyzes an additional N-oxidation of the avaC product which is followed by cyclization and dehydration (PubMed:36702957). The first step of the pathway is perfornmed by the arginine-containing cyclodipeptide synthase (RCPDS) avaA that acts as the scaffold-generating enzyme and is responsible for formation of the cyclo-Arg-Trp (cRW) diketopiperazine. AvaB then acts as a multifunctional flavoenzyme that is responsible for generating the cyclo-Arg-formylkynurenine DKP, which can be deformylated by avaC. AvaB then further catalyzes an additional N-oxidation followed by cyclization and dehydration. The next step is an N-acetylation of the guanidine group catalyzed by the arginine N-acetyltransferase avaD. The roles of the additional enzymes identified within the ava cluster still have to be determined (PubMed:36702957).</text>
</comment>
<comment type="cofactor">
    <cofactor evidence="6">
        <name>FAD</name>
        <dbReference type="ChEBI" id="CHEBI:57692"/>
    </cofactor>
</comment>
<comment type="pathway">
    <text evidence="4">Secondary metabolite metabolism.</text>
</comment>
<comment type="subcellular location">
    <subcellularLocation>
        <location evidence="2">Membrane</location>
        <topology evidence="2">Single-pass membrane protein</topology>
    </subcellularLocation>
</comment>
<comment type="similarity">
    <text evidence="6">Belongs to the FAD-binding monooxygenase family.</text>
</comment>
<feature type="chain" id="PRO_0000461015" description="FAD-dependent monooxygenase avaB">
    <location>
        <begin position="1"/>
        <end position="728"/>
    </location>
</feature>
<feature type="transmembrane region" description="Helical" evidence="2">
    <location>
        <begin position="17"/>
        <end position="37"/>
    </location>
</feature>
<feature type="region of interest" description="Disordered" evidence="3">
    <location>
        <begin position="50"/>
        <end position="72"/>
    </location>
</feature>
<feature type="compositionally biased region" description="Polar residues" evidence="3">
    <location>
        <begin position="50"/>
        <end position="64"/>
    </location>
</feature>
<feature type="binding site" evidence="1">
    <location>
        <position position="168"/>
    </location>
    <ligand>
        <name>FAD</name>
        <dbReference type="ChEBI" id="CHEBI:57692"/>
    </ligand>
</feature>
<feature type="binding site" evidence="1">
    <location>
        <begin position="490"/>
        <end position="491"/>
    </location>
    <ligand>
        <name>NADP(+)</name>
        <dbReference type="ChEBI" id="CHEBI:58349"/>
    </ligand>
</feature>
<proteinExistence type="evidence at protein level"/>
<accession>P9WEK3</accession>
<name>AVAB_ASPVE</name>
<reference key="1">
    <citation type="journal article" date="2023" name="Nat. Chem. Biol.">
        <title>Genome mining for unknown-unknown natural products.</title>
        <authorList>
            <person name="Yee D.A."/>
            <person name="Niwa K."/>
            <person name="Perlatti B."/>
            <person name="Chen M."/>
            <person name="Li Y."/>
            <person name="Tang Y."/>
        </authorList>
    </citation>
    <scope>NUCLEOTIDE SEQUENCE [GENOMIC DNA]</scope>
    <scope>FUNCTION</scope>
    <scope>CATALYTIC ACTIVITY</scope>
    <scope>PATHWAY</scope>
    <source>
        <strain>dI-29</strain>
    </source>
</reference>
<dbReference type="EC" id="1.-.-.-" evidence="4"/>
<dbReference type="EMBL" id="OP596311">
    <property type="protein sequence ID" value="UZP48214.1"/>
    <property type="molecule type" value="Genomic_DNA"/>
</dbReference>
<dbReference type="GO" id="GO:0016020">
    <property type="term" value="C:membrane"/>
    <property type="evidence" value="ECO:0007669"/>
    <property type="project" value="UniProtKB-SubCell"/>
</dbReference>
<dbReference type="GO" id="GO:0004497">
    <property type="term" value="F:monooxygenase activity"/>
    <property type="evidence" value="ECO:0007669"/>
    <property type="project" value="UniProtKB-KW"/>
</dbReference>
<dbReference type="Gene3D" id="3.50.50.60">
    <property type="entry name" value="FAD/NAD(P)-binding domain"/>
    <property type="match status" value="1"/>
</dbReference>
<dbReference type="InterPro" id="IPR036188">
    <property type="entry name" value="FAD/NAD-bd_sf"/>
</dbReference>
<dbReference type="InterPro" id="IPR050346">
    <property type="entry name" value="FMO-like"/>
</dbReference>
<dbReference type="PANTHER" id="PTHR23023">
    <property type="entry name" value="DIMETHYLANILINE MONOOXYGENASE"/>
    <property type="match status" value="1"/>
</dbReference>
<dbReference type="SUPFAM" id="SSF51905">
    <property type="entry name" value="FAD/NAD(P)-binding domain"/>
    <property type="match status" value="2"/>
</dbReference>